<accession>P0CF15</accession>
<dbReference type="SMR" id="P0CF15"/>
<dbReference type="ArachnoServer" id="AS000772">
    <property type="toxin name" value="U2-agatoxin-Ao1v"/>
</dbReference>
<dbReference type="GO" id="GO:0005576">
    <property type="term" value="C:extracellular region"/>
    <property type="evidence" value="ECO:0007669"/>
    <property type="project" value="UniProtKB-SubCell"/>
</dbReference>
<dbReference type="GO" id="GO:0090729">
    <property type="term" value="F:toxin activity"/>
    <property type="evidence" value="ECO:0007669"/>
    <property type="project" value="UniProtKB-KW"/>
</dbReference>
<dbReference type="Pfam" id="PF05980">
    <property type="entry name" value="Toxin_7"/>
    <property type="match status" value="1"/>
</dbReference>
<dbReference type="SUPFAM" id="SSF57059">
    <property type="entry name" value="omega toxin-like"/>
    <property type="match status" value="1"/>
</dbReference>
<reference key="1">
    <citation type="journal article" date="2005" name="Proteins">
        <title>A novel strategy for the identification of toxinlike structures in spider venom.</title>
        <authorList>
            <person name="Kozlov S.A."/>
            <person name="Malyavka A."/>
            <person name="McCutchen B."/>
            <person name="Lu A."/>
            <person name="Schepers E."/>
            <person name="Herrmann R."/>
            <person name="Grishin E.V."/>
        </authorList>
    </citation>
    <scope>NUCLEOTIDE SEQUENCE [MRNA]</scope>
    <source>
        <tissue>Venom gland</tissue>
    </source>
</reference>
<organism>
    <name type="scientific">Agelena orientalis</name>
    <name type="common">Funnel-web spider</name>
    <dbReference type="NCBI Taxonomy" id="293813"/>
    <lineage>
        <taxon>Eukaryota</taxon>
        <taxon>Metazoa</taxon>
        <taxon>Ecdysozoa</taxon>
        <taxon>Arthropoda</taxon>
        <taxon>Chelicerata</taxon>
        <taxon>Arachnida</taxon>
        <taxon>Araneae</taxon>
        <taxon>Araneomorphae</taxon>
        <taxon>Entelegynae</taxon>
        <taxon>Agelenidae</taxon>
        <taxon>Agelena</taxon>
    </lineage>
</organism>
<keyword id="KW-1015">Disulfide bond</keyword>
<keyword id="KW-0960">Knottin</keyword>
<keyword id="KW-0528">Neurotoxin</keyword>
<keyword id="KW-0964">Secreted</keyword>
<keyword id="KW-0732">Signal</keyword>
<keyword id="KW-0800">Toxin</keyword>
<name>TA2GV_AGEOR</name>
<proteinExistence type="evidence at transcript level"/>
<sequence>LLLISAMVGSMIAAVPEEESLQLSEDERGGCLPHNRFCNALSGPRCCSGLTCKELNIWASKCL</sequence>
<protein>
    <recommendedName>
        <fullName>U2-agatoxin-Ao1v</fullName>
        <shortName>U2-AGTX-Ao1v</shortName>
    </recommendedName>
    <alternativeName>
        <fullName>Agel_21</fullName>
    </alternativeName>
</protein>
<feature type="signal peptide" evidence="2">
    <location>
        <begin position="1" status="less than"/>
        <end position="14"/>
    </location>
</feature>
<feature type="propeptide" id="PRO_0000393361" evidence="2">
    <location>
        <begin position="15"/>
        <end position="28"/>
    </location>
</feature>
<feature type="chain" id="PRO_0000393362" description="U2-agatoxin-Ao1v">
    <location>
        <begin position="29"/>
        <end position="63"/>
    </location>
</feature>
<feature type="disulfide bond" evidence="1">
    <location>
        <begin position="31"/>
        <end position="47"/>
    </location>
</feature>
<feature type="disulfide bond" evidence="1">
    <location>
        <begin position="38"/>
        <end position="52"/>
    </location>
</feature>
<feature type="disulfide bond" evidence="1">
    <location>
        <begin position="46"/>
        <end position="62"/>
    </location>
</feature>
<feature type="non-terminal residue">
    <location>
        <position position="1"/>
    </location>
</feature>
<comment type="function">
    <text evidence="1">Insect active toxin causing rapid but reversible paralysis in crickets. No activity shown in mammals. Does not show effect on mammalian voltage-gated calcium channels (By similarity).</text>
</comment>
<comment type="subcellular location">
    <subcellularLocation>
        <location evidence="1">Secreted</location>
    </subcellularLocation>
</comment>
<comment type="tissue specificity">
    <text>Expressed by the venom gland.</text>
</comment>
<comment type="domain">
    <text evidence="1">The presence of a 'disulfide through disulfide knot' structurally defines this protein as a knottin.</text>
</comment>
<comment type="similarity">
    <text evidence="3">Belongs to the neurotoxin 01 (U2-agtx) family.</text>
</comment>
<evidence type="ECO:0000250" key="1"/>
<evidence type="ECO:0000255" key="2"/>
<evidence type="ECO:0000305" key="3"/>